<proteinExistence type="evidence at protein level"/>
<protein>
    <recommendedName>
        <fullName evidence="4">Extended FMRFamide-9</fullName>
        <shortName evidence="4">FMRFa-9</shortName>
    </recommendedName>
</protein>
<reference evidence="5" key="1">
    <citation type="journal article" date="2012" name="Syst. Biol.">
        <title>Peptidomics-based phylogeny and biogeography of Mantophasmatodea (Hexapoda).</title>
        <authorList>
            <person name="Predel R."/>
            <person name="Neupert S."/>
            <person name="Huetteroth W."/>
            <person name="Kahnt J."/>
            <person name="Waidelich D."/>
            <person name="Roth S."/>
        </authorList>
    </citation>
    <scope>PROTEIN SEQUENCE</scope>
    <scope>AMIDATION AT LEU-11</scope>
    <source>
        <tissue evidence="3">Thoracic perisympathetic organs</tissue>
    </source>
</reference>
<comment type="function">
    <text evidence="1">FMRFamides and FMRFamide-like peptides are neuropeptides.</text>
</comment>
<comment type="subcellular location">
    <subcellularLocation>
        <location evidence="6">Secreted</location>
    </subcellularLocation>
</comment>
<comment type="similarity">
    <text evidence="2">Belongs to the FARP (FMRF amide related peptide) family.</text>
</comment>
<keyword id="KW-0027">Amidation</keyword>
<keyword id="KW-0903">Direct protein sequencing</keyword>
<keyword id="KW-0527">Neuropeptide</keyword>
<keyword id="KW-0964">Secreted</keyword>
<accession>B3A069</accession>
<sequence>GRGGASNYVRL</sequence>
<evidence type="ECO:0000250" key="1">
    <source>
        <dbReference type="UniProtKB" id="P34405"/>
    </source>
</evidence>
<evidence type="ECO:0000255" key="2"/>
<evidence type="ECO:0000269" key="3">
    <source>
    </source>
</evidence>
<evidence type="ECO:0000303" key="4">
    <source>
    </source>
</evidence>
<evidence type="ECO:0000305" key="5"/>
<evidence type="ECO:0000305" key="6">
    <source>
    </source>
</evidence>
<feature type="peptide" id="PRO_0000421541" description="Extended FMRFamide-9" evidence="3">
    <location>
        <begin position="1"/>
        <end position="11"/>
    </location>
</feature>
<feature type="modified residue" description="Leucine amide" evidence="3">
    <location>
        <position position="11"/>
    </location>
</feature>
<feature type="unsure residue" description="L or I" evidence="3">
    <location>
        <position position="11"/>
    </location>
</feature>
<name>FAR9_KARBI</name>
<dbReference type="GO" id="GO:0005576">
    <property type="term" value="C:extracellular region"/>
    <property type="evidence" value="ECO:0007669"/>
    <property type="project" value="UniProtKB-SubCell"/>
</dbReference>
<dbReference type="GO" id="GO:0007218">
    <property type="term" value="P:neuropeptide signaling pathway"/>
    <property type="evidence" value="ECO:0007669"/>
    <property type="project" value="UniProtKB-KW"/>
</dbReference>
<organism>
    <name type="scientific">Karoophasma biedouwense</name>
    <name type="common">Gladiator</name>
    <name type="synonym">Heel-walker</name>
    <dbReference type="NCBI Taxonomy" id="253133"/>
    <lineage>
        <taxon>Eukaryota</taxon>
        <taxon>Metazoa</taxon>
        <taxon>Ecdysozoa</taxon>
        <taxon>Arthropoda</taxon>
        <taxon>Hexapoda</taxon>
        <taxon>Insecta</taxon>
        <taxon>Pterygota</taxon>
        <taxon>Neoptera</taxon>
        <taxon>Polyneoptera</taxon>
        <taxon>Mantophasmatodea</taxon>
        <taxon>Austrophasmatidae</taxon>
        <taxon>Karoophasma</taxon>
    </lineage>
</organism>